<organism>
    <name type="scientific">Mycobacterium ulcerans (strain Agy99)</name>
    <dbReference type="NCBI Taxonomy" id="362242"/>
    <lineage>
        <taxon>Bacteria</taxon>
        <taxon>Bacillati</taxon>
        <taxon>Actinomycetota</taxon>
        <taxon>Actinomycetes</taxon>
        <taxon>Mycobacteriales</taxon>
        <taxon>Mycobacteriaceae</taxon>
        <taxon>Mycobacterium</taxon>
        <taxon>Mycobacterium ulcerans group</taxon>
    </lineage>
</organism>
<dbReference type="EMBL" id="CP000325">
    <property type="protein sequence ID" value="ABL03942.1"/>
    <property type="molecule type" value="Genomic_DNA"/>
</dbReference>
<dbReference type="RefSeq" id="WP_011739563.1">
    <property type="nucleotide sequence ID" value="NC_008611.1"/>
</dbReference>
<dbReference type="SMR" id="A0PNM3"/>
<dbReference type="KEGG" id="mul:MUL_1399"/>
<dbReference type="eggNOG" id="COG5343">
    <property type="taxonomic scope" value="Bacteria"/>
</dbReference>
<dbReference type="HOGENOM" id="CLU_075802_1_1_11"/>
<dbReference type="Proteomes" id="UP000000765">
    <property type="component" value="Chromosome"/>
</dbReference>
<dbReference type="GO" id="GO:0005886">
    <property type="term" value="C:plasma membrane"/>
    <property type="evidence" value="ECO:0007669"/>
    <property type="project" value="UniProtKB-SubCell"/>
</dbReference>
<dbReference type="GO" id="GO:0016989">
    <property type="term" value="F:sigma factor antagonist activity"/>
    <property type="evidence" value="ECO:0007669"/>
    <property type="project" value="TreeGrafter"/>
</dbReference>
<dbReference type="GO" id="GO:0006417">
    <property type="term" value="P:regulation of translation"/>
    <property type="evidence" value="ECO:0007669"/>
    <property type="project" value="TreeGrafter"/>
</dbReference>
<dbReference type="Gene3D" id="1.10.10.1320">
    <property type="entry name" value="Anti-sigma factor, zinc-finger domain"/>
    <property type="match status" value="1"/>
</dbReference>
<dbReference type="InterPro" id="IPR051474">
    <property type="entry name" value="Anti-sigma-K/W_factor"/>
</dbReference>
<dbReference type="InterPro" id="IPR041916">
    <property type="entry name" value="Anti_sigma_zinc_sf"/>
</dbReference>
<dbReference type="InterPro" id="IPR018764">
    <property type="entry name" value="RskA_C"/>
</dbReference>
<dbReference type="InterPro" id="IPR053877">
    <property type="entry name" value="RskA_N"/>
</dbReference>
<dbReference type="PANTHER" id="PTHR37461">
    <property type="entry name" value="ANTI-SIGMA-K FACTOR RSKA"/>
    <property type="match status" value="1"/>
</dbReference>
<dbReference type="PANTHER" id="PTHR37461:SF1">
    <property type="entry name" value="ANTI-SIGMA-K FACTOR RSKA"/>
    <property type="match status" value="1"/>
</dbReference>
<dbReference type="Pfam" id="PF10099">
    <property type="entry name" value="RskA_C"/>
    <property type="match status" value="1"/>
</dbReference>
<dbReference type="Pfam" id="PF22618">
    <property type="entry name" value="RskA_N"/>
    <property type="match status" value="1"/>
</dbReference>
<feature type="chain" id="PRO_0000313837" description="Anti-sigma-K factor RskA">
    <location>
        <begin position="1"/>
        <end position="232"/>
    </location>
</feature>
<feature type="topological domain" description="Cytoplasmic" evidence="2">
    <location>
        <begin position="1"/>
        <end position="91"/>
    </location>
</feature>
<feature type="transmembrane region" description="Helical" evidence="2">
    <location>
        <begin position="92"/>
        <end position="112"/>
    </location>
</feature>
<feature type="topological domain" description="Extracellular" evidence="2">
    <location>
        <begin position="113"/>
        <end position="232"/>
    </location>
</feature>
<reference key="1">
    <citation type="journal article" date="2007" name="Genome Res.">
        <title>Reductive evolution and niche adaptation inferred from the genome of Mycobacterium ulcerans, the causative agent of Buruli ulcer.</title>
        <authorList>
            <person name="Stinear T.P."/>
            <person name="Seemann T."/>
            <person name="Pidot S."/>
            <person name="Frigui W."/>
            <person name="Reysset G."/>
            <person name="Garnier T."/>
            <person name="Meurice G."/>
            <person name="Simon D."/>
            <person name="Bouchier C."/>
            <person name="Ma L."/>
            <person name="Tichit M."/>
            <person name="Porter J.L."/>
            <person name="Ryan J."/>
            <person name="Johnson P.D.R."/>
            <person name="Davies J.K."/>
            <person name="Jenkin G.A."/>
            <person name="Small P.L.C."/>
            <person name="Jones L.M."/>
            <person name="Tekaia F."/>
            <person name="Laval F."/>
            <person name="Daffe M."/>
            <person name="Parkhill J."/>
            <person name="Cole S.T."/>
        </authorList>
    </citation>
    <scope>NUCLEOTIDE SEQUENCE [LARGE SCALE GENOMIC DNA]</scope>
    <source>
        <strain>Agy99</strain>
    </source>
</reference>
<comment type="function">
    <text evidence="1">An anti-sigma factor for extracytoplasmic function (ECF) sigma factor SigK. ECF sigma factors are held in an inactive form by an anti-sigma factor until released by regulated intramembrane proteolysis (RIP). RIP occurs when an extracytoplasmic signal triggers a concerted proteolytic cascade to transmit information and elicit cellular responses. The membrane-spanning regulatory substrate protein is first cut extracytoplasmically (site-1 protease, S1P), then within the membrane itself (site-2 protease, S2P, Rip1), while cytoplasmic proteases finish degrading the regulatory protein, liberating the sigma factor (By similarity).</text>
</comment>
<comment type="subcellular location">
    <subcellularLocation>
        <location evidence="3">Cell membrane</location>
        <topology evidence="3">Single-pass membrane protein</topology>
    </subcellularLocation>
</comment>
<comment type="domain">
    <text evidence="1">The cytosolic domain interacts with sigma factor SigK.</text>
</comment>
<comment type="similarity">
    <text evidence="3">Belongs to the anti-sigma-K factor family.</text>
</comment>
<name>RSKA_MYCUA</name>
<evidence type="ECO:0000250" key="1"/>
<evidence type="ECO:0000255" key="2"/>
<evidence type="ECO:0000305" key="3"/>
<keyword id="KW-1003">Cell membrane</keyword>
<keyword id="KW-0472">Membrane</keyword>
<keyword id="KW-0804">Transcription</keyword>
<keyword id="KW-0805">Transcription regulation</keyword>
<keyword id="KW-0812">Transmembrane</keyword>
<keyword id="KW-1133">Transmembrane helix</keyword>
<protein>
    <recommendedName>
        <fullName>Anti-sigma-K factor RskA</fullName>
    </recommendedName>
    <alternativeName>
        <fullName>Regulator of SigK</fullName>
    </alternativeName>
    <alternativeName>
        <fullName>Sigma-K anti-sigma factor RskA</fullName>
    </alternativeName>
</protein>
<gene>
    <name type="primary">rskA</name>
    <name type="ordered locus">MUL_1399</name>
</gene>
<sequence>MTEPTDFQLLELATPYALHAVSDEERLDIERRLSAAPAPVAAAFDEEVRSVRETMSVVSAATAAQPPAELRQALLAAAEPAQSRRQPRWRTAVFASAAAIAVGLGAFGLGVLTRPSASPTVAEQVLAAPDVQTVSGRLGGGTATVMFSRDRNAGVLVMNNVPPPSPGTVYQMWLVDAKGPTSAGTMGPTAVTPSTKATLTDLGDSTTLAFTVEPGTGSTKPTGTVLAELPLR</sequence>
<proteinExistence type="inferred from homology"/>
<accession>A0PNM3</accession>